<proteinExistence type="inferred from homology"/>
<comment type="function">
    <text evidence="1">Negatively regulates transcription of bacterial ribonucleotide reductase nrd genes and operons by binding to NrdR-boxes.</text>
</comment>
<comment type="cofactor">
    <cofactor evidence="1">
        <name>Zn(2+)</name>
        <dbReference type="ChEBI" id="CHEBI:29105"/>
    </cofactor>
    <text evidence="1">Binds 1 zinc ion.</text>
</comment>
<comment type="similarity">
    <text evidence="1">Belongs to the NrdR family.</text>
</comment>
<organism>
    <name type="scientific">Paramagnetospirillum magneticum (strain ATCC 700264 / AMB-1)</name>
    <name type="common">Magnetospirillum magneticum</name>
    <dbReference type="NCBI Taxonomy" id="342108"/>
    <lineage>
        <taxon>Bacteria</taxon>
        <taxon>Pseudomonadati</taxon>
        <taxon>Pseudomonadota</taxon>
        <taxon>Alphaproteobacteria</taxon>
        <taxon>Rhodospirillales</taxon>
        <taxon>Magnetospirillaceae</taxon>
        <taxon>Paramagnetospirillum</taxon>
    </lineage>
</organism>
<accession>Q2W5J7</accession>
<protein>
    <recommendedName>
        <fullName evidence="1">Transcriptional repressor NrdR 2</fullName>
    </recommendedName>
</protein>
<gene>
    <name evidence="1" type="primary">nrdR2</name>
    <name type="ordered locus">amb2074</name>
</gene>
<name>NRDR2_PARM1</name>
<reference key="1">
    <citation type="journal article" date="2005" name="DNA Res.">
        <title>Complete genome sequence of the facultative anaerobic magnetotactic bacterium Magnetospirillum sp. strain AMB-1.</title>
        <authorList>
            <person name="Matsunaga T."/>
            <person name="Okamura Y."/>
            <person name="Fukuda Y."/>
            <person name="Wahyudi A.T."/>
            <person name="Murase Y."/>
            <person name="Takeyama H."/>
        </authorList>
    </citation>
    <scope>NUCLEOTIDE SEQUENCE [LARGE SCALE GENOMIC DNA]</scope>
    <source>
        <strain>ATCC 700264 / AMB-1</strain>
    </source>
</reference>
<dbReference type="EMBL" id="AP007255">
    <property type="protein sequence ID" value="BAE50878.1"/>
    <property type="molecule type" value="Genomic_DNA"/>
</dbReference>
<dbReference type="RefSeq" id="WP_011384474.1">
    <property type="nucleotide sequence ID" value="NC_007626.1"/>
</dbReference>
<dbReference type="SMR" id="Q2W5J7"/>
<dbReference type="STRING" id="342108.amb2074"/>
<dbReference type="KEGG" id="mag:amb2074"/>
<dbReference type="HOGENOM" id="CLU_108412_0_1_5"/>
<dbReference type="OrthoDB" id="9807461at2"/>
<dbReference type="Proteomes" id="UP000007058">
    <property type="component" value="Chromosome"/>
</dbReference>
<dbReference type="GO" id="GO:0005524">
    <property type="term" value="F:ATP binding"/>
    <property type="evidence" value="ECO:0007669"/>
    <property type="project" value="UniProtKB-KW"/>
</dbReference>
<dbReference type="GO" id="GO:0003677">
    <property type="term" value="F:DNA binding"/>
    <property type="evidence" value="ECO:0007669"/>
    <property type="project" value="UniProtKB-KW"/>
</dbReference>
<dbReference type="GO" id="GO:0008270">
    <property type="term" value="F:zinc ion binding"/>
    <property type="evidence" value="ECO:0007669"/>
    <property type="project" value="UniProtKB-UniRule"/>
</dbReference>
<dbReference type="GO" id="GO:0045892">
    <property type="term" value="P:negative regulation of DNA-templated transcription"/>
    <property type="evidence" value="ECO:0007669"/>
    <property type="project" value="UniProtKB-UniRule"/>
</dbReference>
<dbReference type="HAMAP" id="MF_00440">
    <property type="entry name" value="NrdR"/>
    <property type="match status" value="1"/>
</dbReference>
<dbReference type="InterPro" id="IPR005144">
    <property type="entry name" value="ATP-cone_dom"/>
</dbReference>
<dbReference type="InterPro" id="IPR055173">
    <property type="entry name" value="NrdR-like_N"/>
</dbReference>
<dbReference type="InterPro" id="IPR003796">
    <property type="entry name" value="RNR_NrdR-like"/>
</dbReference>
<dbReference type="NCBIfam" id="TIGR00244">
    <property type="entry name" value="transcriptional regulator NrdR"/>
    <property type="match status" value="1"/>
</dbReference>
<dbReference type="PANTHER" id="PTHR30455">
    <property type="entry name" value="TRANSCRIPTIONAL REPRESSOR NRDR"/>
    <property type="match status" value="1"/>
</dbReference>
<dbReference type="PANTHER" id="PTHR30455:SF2">
    <property type="entry name" value="TRANSCRIPTIONAL REPRESSOR NRDR"/>
    <property type="match status" value="1"/>
</dbReference>
<dbReference type="Pfam" id="PF03477">
    <property type="entry name" value="ATP-cone"/>
    <property type="match status" value="1"/>
</dbReference>
<dbReference type="Pfam" id="PF22811">
    <property type="entry name" value="Zn_ribbon_NrdR"/>
    <property type="match status" value="1"/>
</dbReference>
<dbReference type="PROSITE" id="PS51161">
    <property type="entry name" value="ATP_CONE"/>
    <property type="match status" value="1"/>
</dbReference>
<keyword id="KW-0067">ATP-binding</keyword>
<keyword id="KW-0238">DNA-binding</keyword>
<keyword id="KW-0479">Metal-binding</keyword>
<keyword id="KW-0547">Nucleotide-binding</keyword>
<keyword id="KW-0678">Repressor</keyword>
<keyword id="KW-0804">Transcription</keyword>
<keyword id="KW-0805">Transcription regulation</keyword>
<keyword id="KW-0862">Zinc</keyword>
<keyword id="KW-0863">Zinc-finger</keyword>
<sequence>MRCPFCGQDDTQVKDSRPTDDNAAIRRRRACPGCGSRFTTFERVQIRDLVVVKKDGSRSTFDREKVVKSLQIALRKRPVEDDQIERIANGIYRRLESLGENEVPSKLIGELVMDVLMEMDQVAYLRYASVYRNFREAKDFGDFLGKMGTSSGD</sequence>
<feature type="chain" id="PRO_0000249025" description="Transcriptional repressor NrdR 2">
    <location>
        <begin position="1"/>
        <end position="153"/>
    </location>
</feature>
<feature type="domain" description="ATP-cone" evidence="1">
    <location>
        <begin position="49"/>
        <end position="139"/>
    </location>
</feature>
<feature type="zinc finger region" evidence="1">
    <location>
        <begin position="3"/>
        <end position="34"/>
    </location>
</feature>
<evidence type="ECO:0000255" key="1">
    <source>
        <dbReference type="HAMAP-Rule" id="MF_00440"/>
    </source>
</evidence>